<reference key="1">
    <citation type="journal article" date="2012" name="MBio">
        <title>Comparative genome analysis of Trichophyton rubrum and related dermatophytes reveals candidate genes involved in infection.</title>
        <authorList>
            <person name="Martinez D.A."/>
            <person name="Oliver B.G."/>
            <person name="Graeser Y."/>
            <person name="Goldberg J.M."/>
            <person name="Li W."/>
            <person name="Martinez-Rossi N.M."/>
            <person name="Monod M."/>
            <person name="Shelest E."/>
            <person name="Barton R.C."/>
            <person name="Birch E."/>
            <person name="Brakhage A.A."/>
            <person name="Chen Z."/>
            <person name="Gurr S.J."/>
            <person name="Heiman D."/>
            <person name="Heitman J."/>
            <person name="Kosti I."/>
            <person name="Rossi A."/>
            <person name="Saif S."/>
            <person name="Samalova M."/>
            <person name="Saunders C.W."/>
            <person name="Shea T."/>
            <person name="Summerbell R.C."/>
            <person name="Xu J."/>
            <person name="Young S."/>
            <person name="Zeng Q."/>
            <person name="Birren B.W."/>
            <person name="Cuomo C.A."/>
            <person name="White T.C."/>
        </authorList>
    </citation>
    <scope>NUCLEOTIDE SEQUENCE [LARGE SCALE GENOMIC DNA]</scope>
    <source>
        <strain>CBS 112818</strain>
    </source>
</reference>
<reference key="2">
    <citation type="journal article" date="2013" name="ACS Synth. Biol.">
        <title>Discovery of cryptic polyketide metabolites from dermatophytes using heterologous expression in Aspergillus nidulans.</title>
        <authorList>
            <person name="Yin W.B."/>
            <person name="Chooi Y.H."/>
            <person name="Smith A.R."/>
            <person name="Cacho R.A."/>
            <person name="Hu Y."/>
            <person name="White T.C."/>
            <person name="Tang Y."/>
        </authorList>
    </citation>
    <scope>FUNCTION</scope>
</reference>
<reference key="3">
    <citation type="journal article" date="2013" name="Org. Lett.">
        <title>Genome mining of a prenylated and immunosuppressive polyketide from pathogenic fungi.</title>
        <authorList>
            <person name="Chooi Y.H."/>
            <person name="Fang J."/>
            <person name="Liu H."/>
            <person name="Filler S.G."/>
            <person name="Wang P."/>
            <person name="Tang Y."/>
        </authorList>
    </citation>
    <scope>FUNCTION</scope>
</reference>
<feature type="chain" id="PRO_0000437899" description="Lactamase-like protein nscB">
    <location>
        <begin position="1"/>
        <end position="331"/>
    </location>
</feature>
<feature type="active site" description="Proton donor/acceptor" evidence="3">
    <location>
        <position position="110"/>
    </location>
</feature>
<feature type="binding site" evidence="2">
    <location>
        <position position="106"/>
    </location>
    <ligand>
        <name>Zn(2+)</name>
        <dbReference type="ChEBI" id="CHEBI:29105"/>
        <label>1</label>
        <note>catalytic</note>
    </ligand>
</feature>
<feature type="binding site" evidence="2">
    <location>
        <position position="108"/>
    </location>
    <ligand>
        <name>Zn(2+)</name>
        <dbReference type="ChEBI" id="CHEBI:29105"/>
        <label>1</label>
        <note>catalytic</note>
    </ligand>
</feature>
<feature type="binding site" evidence="2">
    <location>
        <position position="110"/>
    </location>
    <ligand>
        <name>Zn(2+)</name>
        <dbReference type="ChEBI" id="CHEBI:29105"/>
        <label>2</label>
        <note>catalytic</note>
    </ligand>
</feature>
<feature type="binding site" evidence="2">
    <location>
        <position position="111"/>
    </location>
    <ligand>
        <name>Zn(2+)</name>
        <dbReference type="ChEBI" id="CHEBI:29105"/>
        <label>2</label>
        <note>catalytic</note>
    </ligand>
</feature>
<organism>
    <name type="scientific">Trichophyton tonsurans (strain CBS 112818)</name>
    <name type="common">Scalp ringworm fungus</name>
    <dbReference type="NCBI Taxonomy" id="647933"/>
    <lineage>
        <taxon>Eukaryota</taxon>
        <taxon>Fungi</taxon>
        <taxon>Dikarya</taxon>
        <taxon>Ascomycota</taxon>
        <taxon>Pezizomycotina</taxon>
        <taxon>Eurotiomycetes</taxon>
        <taxon>Eurotiomycetidae</taxon>
        <taxon>Onygenales</taxon>
        <taxon>Arthrodermataceae</taxon>
        <taxon>Trichophyton</taxon>
    </lineage>
</organism>
<accession>F2S702</accession>
<proteinExistence type="inferred from homology"/>
<dbReference type="EC" id="3.1.-.-" evidence="8"/>
<dbReference type="EMBL" id="GG698521">
    <property type="protein sequence ID" value="EGD99351.1"/>
    <property type="molecule type" value="Genomic_DNA"/>
</dbReference>
<dbReference type="SMR" id="F2S702"/>
<dbReference type="HOGENOM" id="CLU_048478_1_0_1"/>
<dbReference type="OrthoDB" id="3433at34384"/>
<dbReference type="Proteomes" id="UP000009172">
    <property type="component" value="Unassembled WGS sequence"/>
</dbReference>
<dbReference type="GO" id="GO:0008800">
    <property type="term" value="F:beta-lactamase activity"/>
    <property type="evidence" value="ECO:0007669"/>
    <property type="project" value="InterPro"/>
</dbReference>
<dbReference type="GO" id="GO:0008270">
    <property type="term" value="F:zinc ion binding"/>
    <property type="evidence" value="ECO:0007669"/>
    <property type="project" value="InterPro"/>
</dbReference>
<dbReference type="GO" id="GO:0017001">
    <property type="term" value="P:antibiotic catabolic process"/>
    <property type="evidence" value="ECO:0007669"/>
    <property type="project" value="InterPro"/>
</dbReference>
<dbReference type="GO" id="GO:0044550">
    <property type="term" value="P:secondary metabolite biosynthetic process"/>
    <property type="evidence" value="ECO:0007669"/>
    <property type="project" value="UniProtKB-ARBA"/>
</dbReference>
<dbReference type="CDD" id="cd07722">
    <property type="entry name" value="LACTB2-like_MBL-fold"/>
    <property type="match status" value="1"/>
</dbReference>
<dbReference type="FunFam" id="3.60.15.10:FF:000041">
    <property type="entry name" value="Metallo-beta-lactamase domain protein"/>
    <property type="match status" value="1"/>
</dbReference>
<dbReference type="Gene3D" id="3.60.15.10">
    <property type="entry name" value="Ribonuclease Z/Hydroxyacylglutathione hydrolase-like"/>
    <property type="match status" value="1"/>
</dbReference>
<dbReference type="Gene3D" id="1.10.10.10">
    <property type="entry name" value="Winged helix-like DNA-binding domain superfamily/Winged helix DNA-binding domain"/>
    <property type="match status" value="1"/>
</dbReference>
<dbReference type="InterPro" id="IPR001018">
    <property type="entry name" value="Beta-lactamase_class-B_CS"/>
</dbReference>
<dbReference type="InterPro" id="IPR047921">
    <property type="entry name" value="LACTB2-like_MBL-fold"/>
</dbReference>
<dbReference type="InterPro" id="IPR001279">
    <property type="entry name" value="Metallo-B-lactamas"/>
</dbReference>
<dbReference type="InterPro" id="IPR036866">
    <property type="entry name" value="RibonucZ/Hydroxyglut_hydro"/>
</dbReference>
<dbReference type="InterPro" id="IPR050662">
    <property type="entry name" value="Sec-metab_biosynth-thioest"/>
</dbReference>
<dbReference type="InterPro" id="IPR036388">
    <property type="entry name" value="WH-like_DNA-bd_sf"/>
</dbReference>
<dbReference type="PANTHER" id="PTHR23131">
    <property type="entry name" value="ENDORIBONUCLEASE LACTB2"/>
    <property type="match status" value="1"/>
</dbReference>
<dbReference type="PANTHER" id="PTHR23131:SF2">
    <property type="entry name" value="LACTAMASE-LIKE PROTEIN APTB-RELATED"/>
    <property type="match status" value="1"/>
</dbReference>
<dbReference type="Pfam" id="PF00753">
    <property type="entry name" value="Lactamase_B"/>
    <property type="match status" value="2"/>
</dbReference>
<dbReference type="SMART" id="SM00849">
    <property type="entry name" value="Lactamase_B"/>
    <property type="match status" value="1"/>
</dbReference>
<dbReference type="SUPFAM" id="SSF56281">
    <property type="entry name" value="Metallo-hydrolase/oxidoreductase"/>
    <property type="match status" value="1"/>
</dbReference>
<dbReference type="PROSITE" id="PS00743">
    <property type="entry name" value="BETA_LACTAMASE_B_1"/>
    <property type="match status" value="1"/>
</dbReference>
<gene>
    <name evidence="5" type="primary">nscB</name>
    <name type="ORF">TESG_06705</name>
</gene>
<keyword id="KW-0378">Hydrolase</keyword>
<keyword id="KW-0479">Metal-binding</keyword>
<keyword id="KW-0862">Zinc</keyword>
<sequence length="331" mass="36643">MDQSSSGGSMGGRLPFNQSFWEEFLMGREGHLPALPEISHVSKSVVRILGGNPGSMHLQGTNTYLVGTGRSRILIDTAQGLPVWISRISSFLYTQKIELSYVLLTHWHGDHTGGVPDLISQNSSLSNRIYKNRPDSGQNPITHGQIFSVAGATVRAILTPGHSVDHMCFLLEEENALFTGDNVLGHGFSVAQDLGRYMDSLRDMASLGCRIGYPAHGAVIEKLPGKLEEYIQHREGRERMMLSALTRQRVQGEGVREGGVKCGLTLNEIVMVIYGRLPQEVIEKALAPSLLQVLWKLTEDRMVGFKPGDPLKRQWFALEQKKRNKVRGCPS</sequence>
<name>NSCB_TRIT1</name>
<evidence type="ECO:0000250" key="1">
    <source>
        <dbReference type="UniProtKB" id="A1D8J2"/>
    </source>
</evidence>
<evidence type="ECO:0000250" key="2">
    <source>
        <dbReference type="UniProtKB" id="Q988B9"/>
    </source>
</evidence>
<evidence type="ECO:0000255" key="3"/>
<evidence type="ECO:0000269" key="4">
    <source>
    </source>
</evidence>
<evidence type="ECO:0000303" key="5">
    <source>
    </source>
</evidence>
<evidence type="ECO:0000305" key="6"/>
<evidence type="ECO:0000305" key="7">
    <source>
    </source>
</evidence>
<evidence type="ECO:0000305" key="8">
    <source>
    </source>
</evidence>
<comment type="function">
    <text evidence="1 4 7">Lactamase-like protein; part of the gene cluster that mediates the biosynthesis of neosartoricin B, a prenylated anthracenone that probably exhibits T-cell antiproliferative activity, suggestive of a physiological role as an immunosuppressive agent (PubMed:23368997, PubMed:23758576). The non-reducing polyketide synthase nscA probably synthesizes and cyclizes the decaketide backbone (By similarity). The hydrolase nscB then mediates the product release through hydrolysis followed by spontaneous decarboxylation (By similarity). The prenyltransferase nscD catalyzes the addition of the dimethylallyl group to the aromatic C5 (By similarity). The FAD-dependent monooxygenase nscC is then responsible for the stereospecific hydroxylation at C2 (By similarity). Neosartoricin B can be converted into two additional compounds neosartoricins C and D (PubMed:23758576). Neosartoricin C is a spirocyclic compound that is cyclized through the attack of C3 hydroxyl on C14, followed by dehydration (PubMed:23758576). On the other hand, neosartoricin D is a further cyclized compound in which attack of C2 on C14 in neosartoricin C results in the formation of the acetal-containing dioxabicyclo-octanone ring (PubMed:23758576). Both of these compounds are novel and possibly represent related metabolites of the gene cluster (PubMed:23758576).</text>
</comment>
<comment type="cofactor">
    <cofactor evidence="2">
        <name>Zn(2+)</name>
        <dbReference type="ChEBI" id="CHEBI:29105"/>
    </cofactor>
    <text evidence="2">Binds 2 Zn(2+) ions per subunit.</text>
</comment>
<comment type="pathway">
    <text evidence="4">Secondary metabolite biosynthesis.</text>
</comment>
<comment type="similarity">
    <text evidence="6">Belongs to the metallo-beta-lactamase superfamily.</text>
</comment>
<protein>
    <recommendedName>
        <fullName evidence="5">Lactamase-like protein nscB</fullName>
        <ecNumber evidence="8">3.1.-.-</ecNumber>
    </recommendedName>
    <alternativeName>
        <fullName evidence="5">Neosartoricin B biosynthesis protein B</fullName>
    </alternativeName>
</protein>